<keyword id="KW-0067">ATP-binding</keyword>
<keyword id="KW-0238">DNA-binding</keyword>
<keyword id="KW-0255">Endonuclease</keyword>
<keyword id="KW-0378">Hydrolase</keyword>
<keyword id="KW-0540">Nuclease</keyword>
<keyword id="KW-0547">Nucleotide-binding</keyword>
<keyword id="KW-1185">Reference proteome</keyword>
<keyword id="KW-0694">RNA-binding</keyword>
<keyword id="KW-0699">rRNA-binding</keyword>
<proteinExistence type="inferred from homology"/>
<organism>
    <name type="scientific">Ruminiclostridium cellulolyticum (strain ATCC 35319 / DSM 5812 / JCM 6584 / H10)</name>
    <name type="common">Clostridium cellulolyticum</name>
    <dbReference type="NCBI Taxonomy" id="394503"/>
    <lineage>
        <taxon>Bacteria</taxon>
        <taxon>Bacillati</taxon>
        <taxon>Bacillota</taxon>
        <taxon>Clostridia</taxon>
        <taxon>Eubacteriales</taxon>
        <taxon>Oscillospiraceae</taxon>
        <taxon>Ruminiclostridium</taxon>
    </lineage>
</organism>
<sequence length="792" mass="87948">MNEKTHRVLEFDKILDKLKGLTASELGRELVLELTPQTDYRVVEKMLSETNDGVSCIMRRGSPPLGGITDIRMSLKRLDMGGVLNPGELLRLAGVLRAARRLKGYINDKLDENNASVVKELISCLESNQRLEQKIDNCILSEDEIADNASPALSSIRRQIKEQQASIKDKLNSIIRSTKYQKYIQESVVTMRGDRYVIPVKQEHKGDIPGLVHDSSASGATLFIEPMAVVEANNSIKQLRVKEQTEIDRILAELSQDASLVLPQLNANMSIMARLDFIFAKSKLAIDYNCICPKINDTGKIIIKKGRHPLLDPKIVVPIDFWIGEKFSSLIVTGPNTGGKTVSLKTVGLFTLMMQSGLLVPANDGTEMSVFEKIYADIGDEQSIEQSLSTFSSHMKNIVDILSGVNNKSLILLDELGAGTDPTEGAALAMSILECLHQMGATTLATTHYSELKVYAISTTGVENASCEFDVETLRPTYRLLIGVPGKSNAFAISKRLGLTDDIIERSKEFLSQEDIRFEDILLSIEKNRSEAEKEKMRAESYRQEAERLKKDLEDQKRRLAAQKESELRKAREEARRILTDSKRQADELVSEMKRLAKEQEEAEVRRQTEELRQKLNKSINNLDDSLVESIMPRQGLVKPPKNLKPGDTVLIVNLNQKGTVLTLPDKNGEAQVQAGIMKINVHISNLKLVDEQKQQIQRTGMGKIGVSKAQNMSTEIDLRGMMLSEAVDVVDKYLDDASIAGMGGVTLIHGKGTGALRAGLHQHLKHNPHIKSFRLGKLGEGENGVTVVELK</sequence>
<dbReference type="EC" id="3.1.-.-" evidence="1"/>
<dbReference type="EC" id="3.6.4.-" evidence="1"/>
<dbReference type="EMBL" id="CP001348">
    <property type="protein sequence ID" value="ACL75824.1"/>
    <property type="molecule type" value="Genomic_DNA"/>
</dbReference>
<dbReference type="RefSeq" id="WP_015924966.1">
    <property type="nucleotide sequence ID" value="NC_011898.1"/>
</dbReference>
<dbReference type="SMR" id="B8I1Z8"/>
<dbReference type="STRING" id="394503.Ccel_1470"/>
<dbReference type="KEGG" id="cce:Ccel_1470"/>
<dbReference type="eggNOG" id="COG1193">
    <property type="taxonomic scope" value="Bacteria"/>
</dbReference>
<dbReference type="HOGENOM" id="CLU_011252_2_1_9"/>
<dbReference type="OrthoDB" id="9808166at2"/>
<dbReference type="Proteomes" id="UP000001349">
    <property type="component" value="Chromosome"/>
</dbReference>
<dbReference type="GO" id="GO:0005524">
    <property type="term" value="F:ATP binding"/>
    <property type="evidence" value="ECO:0007669"/>
    <property type="project" value="UniProtKB-UniRule"/>
</dbReference>
<dbReference type="GO" id="GO:0016887">
    <property type="term" value="F:ATP hydrolysis activity"/>
    <property type="evidence" value="ECO:0007669"/>
    <property type="project" value="InterPro"/>
</dbReference>
<dbReference type="GO" id="GO:0140664">
    <property type="term" value="F:ATP-dependent DNA damage sensor activity"/>
    <property type="evidence" value="ECO:0007669"/>
    <property type="project" value="InterPro"/>
</dbReference>
<dbReference type="GO" id="GO:0004519">
    <property type="term" value="F:endonuclease activity"/>
    <property type="evidence" value="ECO:0007669"/>
    <property type="project" value="UniProtKB-UniRule"/>
</dbReference>
<dbReference type="GO" id="GO:0030983">
    <property type="term" value="F:mismatched DNA binding"/>
    <property type="evidence" value="ECO:0007669"/>
    <property type="project" value="InterPro"/>
</dbReference>
<dbReference type="GO" id="GO:0043023">
    <property type="term" value="F:ribosomal large subunit binding"/>
    <property type="evidence" value="ECO:0007669"/>
    <property type="project" value="UniProtKB-UniRule"/>
</dbReference>
<dbReference type="GO" id="GO:0019843">
    <property type="term" value="F:rRNA binding"/>
    <property type="evidence" value="ECO:0007669"/>
    <property type="project" value="UniProtKB-UniRule"/>
</dbReference>
<dbReference type="GO" id="GO:0006298">
    <property type="term" value="P:mismatch repair"/>
    <property type="evidence" value="ECO:0007669"/>
    <property type="project" value="InterPro"/>
</dbReference>
<dbReference type="GO" id="GO:0045910">
    <property type="term" value="P:negative regulation of DNA recombination"/>
    <property type="evidence" value="ECO:0007669"/>
    <property type="project" value="InterPro"/>
</dbReference>
<dbReference type="GO" id="GO:0072344">
    <property type="term" value="P:rescue of stalled ribosome"/>
    <property type="evidence" value="ECO:0007669"/>
    <property type="project" value="UniProtKB-UniRule"/>
</dbReference>
<dbReference type="CDD" id="cd03280">
    <property type="entry name" value="ABC_MutS2"/>
    <property type="match status" value="1"/>
</dbReference>
<dbReference type="CDD" id="cd06503">
    <property type="entry name" value="ATP-synt_Fo_b"/>
    <property type="match status" value="1"/>
</dbReference>
<dbReference type="FunFam" id="3.40.50.300:FF:000830">
    <property type="entry name" value="Endonuclease MutS2"/>
    <property type="match status" value="1"/>
</dbReference>
<dbReference type="Gene3D" id="3.30.1370.110">
    <property type="match status" value="1"/>
</dbReference>
<dbReference type="Gene3D" id="3.40.50.300">
    <property type="entry name" value="P-loop containing nucleotide triphosphate hydrolases"/>
    <property type="match status" value="1"/>
</dbReference>
<dbReference type="HAMAP" id="MF_00092">
    <property type="entry name" value="MutS2"/>
    <property type="match status" value="1"/>
</dbReference>
<dbReference type="InterPro" id="IPR000432">
    <property type="entry name" value="DNA_mismatch_repair_MutS_C"/>
</dbReference>
<dbReference type="InterPro" id="IPR007696">
    <property type="entry name" value="DNA_mismatch_repair_MutS_core"/>
</dbReference>
<dbReference type="InterPro" id="IPR036187">
    <property type="entry name" value="DNA_mismatch_repair_MutS_sf"/>
</dbReference>
<dbReference type="InterPro" id="IPR046893">
    <property type="entry name" value="MSSS"/>
</dbReference>
<dbReference type="InterPro" id="IPR045076">
    <property type="entry name" value="MutS"/>
</dbReference>
<dbReference type="InterPro" id="IPR005747">
    <property type="entry name" value="MutS2"/>
</dbReference>
<dbReference type="InterPro" id="IPR027417">
    <property type="entry name" value="P-loop_NTPase"/>
</dbReference>
<dbReference type="InterPro" id="IPR002625">
    <property type="entry name" value="Smr_dom"/>
</dbReference>
<dbReference type="InterPro" id="IPR036063">
    <property type="entry name" value="Smr_dom_sf"/>
</dbReference>
<dbReference type="NCBIfam" id="TIGR01069">
    <property type="entry name" value="mutS2"/>
    <property type="match status" value="1"/>
</dbReference>
<dbReference type="PANTHER" id="PTHR48466:SF2">
    <property type="entry name" value="OS10G0509000 PROTEIN"/>
    <property type="match status" value="1"/>
</dbReference>
<dbReference type="PANTHER" id="PTHR48466">
    <property type="entry name" value="OS10G0509000 PROTEIN-RELATED"/>
    <property type="match status" value="1"/>
</dbReference>
<dbReference type="Pfam" id="PF20297">
    <property type="entry name" value="MSSS"/>
    <property type="match status" value="1"/>
</dbReference>
<dbReference type="Pfam" id="PF00488">
    <property type="entry name" value="MutS_V"/>
    <property type="match status" value="1"/>
</dbReference>
<dbReference type="Pfam" id="PF01713">
    <property type="entry name" value="Smr"/>
    <property type="match status" value="1"/>
</dbReference>
<dbReference type="PIRSF" id="PIRSF005814">
    <property type="entry name" value="MutS_YshD"/>
    <property type="match status" value="1"/>
</dbReference>
<dbReference type="SMART" id="SM00534">
    <property type="entry name" value="MUTSac"/>
    <property type="match status" value="1"/>
</dbReference>
<dbReference type="SMART" id="SM00533">
    <property type="entry name" value="MUTSd"/>
    <property type="match status" value="1"/>
</dbReference>
<dbReference type="SMART" id="SM00463">
    <property type="entry name" value="SMR"/>
    <property type="match status" value="1"/>
</dbReference>
<dbReference type="SUPFAM" id="SSF48334">
    <property type="entry name" value="DNA repair protein MutS, domain III"/>
    <property type="match status" value="1"/>
</dbReference>
<dbReference type="SUPFAM" id="SSF52540">
    <property type="entry name" value="P-loop containing nucleoside triphosphate hydrolases"/>
    <property type="match status" value="1"/>
</dbReference>
<dbReference type="SUPFAM" id="SSF160443">
    <property type="entry name" value="SMR domain-like"/>
    <property type="match status" value="1"/>
</dbReference>
<dbReference type="PROSITE" id="PS00486">
    <property type="entry name" value="DNA_MISMATCH_REPAIR_2"/>
    <property type="match status" value="1"/>
</dbReference>
<dbReference type="PROSITE" id="PS50828">
    <property type="entry name" value="SMR"/>
    <property type="match status" value="1"/>
</dbReference>
<name>MUTS2_RUMCH</name>
<gene>
    <name evidence="1" type="primary">mutS2</name>
    <name evidence="1" type="synonym">rqcU</name>
    <name type="ordered locus">Ccel_1470</name>
</gene>
<protein>
    <recommendedName>
        <fullName evidence="1">Endonuclease MutS2</fullName>
        <ecNumber evidence="1">3.1.-.-</ecNumber>
    </recommendedName>
    <alternativeName>
        <fullName evidence="1">Ribosome-associated protein quality control-upstream factor</fullName>
        <shortName evidence="1">RQC-upstream factor</shortName>
        <shortName evidence="1">RqcU</shortName>
        <ecNumber evidence="1">3.6.4.-</ecNumber>
    </alternativeName>
</protein>
<reference key="1">
    <citation type="submission" date="2009-01" db="EMBL/GenBank/DDBJ databases">
        <title>Complete sequence of Clostridium cellulolyticum H10.</title>
        <authorList>
            <consortium name="US DOE Joint Genome Institute"/>
            <person name="Lucas S."/>
            <person name="Copeland A."/>
            <person name="Lapidus A."/>
            <person name="Glavina del Rio T."/>
            <person name="Dalin E."/>
            <person name="Tice H."/>
            <person name="Bruce D."/>
            <person name="Goodwin L."/>
            <person name="Pitluck S."/>
            <person name="Chertkov O."/>
            <person name="Saunders E."/>
            <person name="Brettin T."/>
            <person name="Detter J.C."/>
            <person name="Han C."/>
            <person name="Larimer F."/>
            <person name="Land M."/>
            <person name="Hauser L."/>
            <person name="Kyrpides N."/>
            <person name="Ivanova N."/>
            <person name="Zhou J."/>
            <person name="Richardson P."/>
        </authorList>
    </citation>
    <scope>NUCLEOTIDE SEQUENCE [LARGE SCALE GENOMIC DNA]</scope>
    <source>
        <strain>ATCC 35319 / DSM 5812 / JCM 6584 / H10</strain>
    </source>
</reference>
<feature type="chain" id="PRO_1000192216" description="Endonuclease MutS2">
    <location>
        <begin position="1"/>
        <end position="792"/>
    </location>
</feature>
<feature type="domain" description="Smr" evidence="1">
    <location>
        <begin position="717"/>
        <end position="792"/>
    </location>
</feature>
<feature type="binding site" evidence="1">
    <location>
        <begin position="334"/>
        <end position="341"/>
    </location>
    <ligand>
        <name>ATP</name>
        <dbReference type="ChEBI" id="CHEBI:30616"/>
    </ligand>
</feature>
<evidence type="ECO:0000255" key="1">
    <source>
        <dbReference type="HAMAP-Rule" id="MF_00092"/>
    </source>
</evidence>
<accession>B8I1Z8</accession>
<comment type="function">
    <text evidence="1">Endonuclease that is involved in the suppression of homologous recombination and thus may have a key role in the control of bacterial genetic diversity.</text>
</comment>
<comment type="function">
    <text evidence="1">Acts as a ribosome collision sensor, splitting the ribosome into its 2 subunits. Detects stalled/collided 70S ribosomes which it binds and splits by an ATP-hydrolysis driven conformational change. Acts upstream of the ribosome quality control system (RQC), a ribosome-associated complex that mediates the extraction of incompletely synthesized nascent chains from stalled ribosomes and their subsequent degradation. Probably generates substrates for RQC.</text>
</comment>
<comment type="subunit">
    <text evidence="1">Homodimer. Binds to stalled ribosomes, contacting rRNA.</text>
</comment>
<comment type="similarity">
    <text evidence="1">Belongs to the DNA mismatch repair MutS family. MutS2 subfamily.</text>
</comment>